<sequence length="515" mass="57579">MIILKKQHDTIIVLDFGSQYNQLIARRIREFGVYSELHPHTITAEEIKAMNPKGIIFSGGPNSVYGEGALHCDEKIFDLGLPIFGICYGMQLMTQQFGGTVERANHREYGKAVLKVENESKLYANLPEEQVVWMSHGDLVTGLPEGFVVDATSESCPIAGMSNEAKNLYGVQFHPEVRHSEHGNDLIKNFVFGVCGCSEGWNMENFIEVELEKIRETVGDKKVLCALSGGVDSSVVAVLIHKAIGDQLTCIFVDHGLLRKGEAEGVMKTFSEGFHMNVIKVDAKERFMNKLKGVEDPEQKRKIIGNEFIYVFDDEASKLEGMDFLAQGTLYTDIVESGTATAQTIKSHHNVGGLPEDMQFKLIEPLNTLFKDEVRVLGSELGIPDEIVWRQPFPGPGLGIRVLGEITEEKLEIVRESDAILREEIIKAGLDREIWQYFTALPGMRSVGVMGDERTYDYTVGIRAVTSIDGMTADWARIPWDVLEKISVRIVNEVKHVNRIVYDVTSKPPATIEWE</sequence>
<reference key="1">
    <citation type="submission" date="2009-04" db="EMBL/GenBank/DDBJ databases">
        <title>Genome sequence of Bacillus anthracis A0248.</title>
        <authorList>
            <person name="Dodson R.J."/>
            <person name="Munk A.C."/>
            <person name="Bruce D."/>
            <person name="Detter C."/>
            <person name="Tapia R."/>
            <person name="Sutton G."/>
            <person name="Sims D."/>
            <person name="Brettin T."/>
        </authorList>
    </citation>
    <scope>NUCLEOTIDE SEQUENCE [LARGE SCALE GENOMIC DNA]</scope>
    <source>
        <strain>A0248</strain>
    </source>
</reference>
<name>GUAA_BACAA</name>
<gene>
    <name evidence="1" type="primary">guaA</name>
    <name type="ordered locus">BAA_0311</name>
</gene>
<evidence type="ECO:0000255" key="1">
    <source>
        <dbReference type="HAMAP-Rule" id="MF_00344"/>
    </source>
</evidence>
<accession>C3PBL1</accession>
<keyword id="KW-0067">ATP-binding</keyword>
<keyword id="KW-0315">Glutamine amidotransferase</keyword>
<keyword id="KW-0332">GMP biosynthesis</keyword>
<keyword id="KW-0436">Ligase</keyword>
<keyword id="KW-0547">Nucleotide-binding</keyword>
<keyword id="KW-0658">Purine biosynthesis</keyword>
<comment type="function">
    <text evidence="1">Catalyzes the synthesis of GMP from XMP.</text>
</comment>
<comment type="catalytic activity">
    <reaction evidence="1">
        <text>XMP + L-glutamine + ATP + H2O = GMP + L-glutamate + AMP + diphosphate + 2 H(+)</text>
        <dbReference type="Rhea" id="RHEA:11680"/>
        <dbReference type="ChEBI" id="CHEBI:15377"/>
        <dbReference type="ChEBI" id="CHEBI:15378"/>
        <dbReference type="ChEBI" id="CHEBI:29985"/>
        <dbReference type="ChEBI" id="CHEBI:30616"/>
        <dbReference type="ChEBI" id="CHEBI:33019"/>
        <dbReference type="ChEBI" id="CHEBI:57464"/>
        <dbReference type="ChEBI" id="CHEBI:58115"/>
        <dbReference type="ChEBI" id="CHEBI:58359"/>
        <dbReference type="ChEBI" id="CHEBI:456215"/>
        <dbReference type="EC" id="6.3.5.2"/>
    </reaction>
</comment>
<comment type="pathway">
    <text evidence="1">Purine metabolism; GMP biosynthesis; GMP from XMP (L-Gln route): step 1/1.</text>
</comment>
<comment type="subunit">
    <text evidence="1">Homodimer.</text>
</comment>
<proteinExistence type="inferred from homology"/>
<protein>
    <recommendedName>
        <fullName evidence="1">GMP synthase [glutamine-hydrolyzing]</fullName>
        <ecNumber evidence="1">6.3.5.2</ecNumber>
    </recommendedName>
    <alternativeName>
        <fullName evidence="1">GMP synthetase</fullName>
    </alternativeName>
    <alternativeName>
        <fullName evidence="1">Glutamine amidotransferase</fullName>
    </alternativeName>
</protein>
<feature type="chain" id="PRO_1000133349" description="GMP synthase [glutamine-hydrolyzing]">
    <location>
        <begin position="1"/>
        <end position="515"/>
    </location>
</feature>
<feature type="domain" description="Glutamine amidotransferase type-1" evidence="1">
    <location>
        <begin position="10"/>
        <end position="200"/>
    </location>
</feature>
<feature type="domain" description="GMPS ATP-PPase" evidence="1">
    <location>
        <begin position="201"/>
        <end position="390"/>
    </location>
</feature>
<feature type="active site" description="Nucleophile" evidence="1">
    <location>
        <position position="87"/>
    </location>
</feature>
<feature type="active site" evidence="1">
    <location>
        <position position="174"/>
    </location>
</feature>
<feature type="active site" evidence="1">
    <location>
        <position position="176"/>
    </location>
</feature>
<feature type="binding site" evidence="1">
    <location>
        <begin position="228"/>
        <end position="234"/>
    </location>
    <ligand>
        <name>ATP</name>
        <dbReference type="ChEBI" id="CHEBI:30616"/>
    </ligand>
</feature>
<dbReference type="EC" id="6.3.5.2" evidence="1"/>
<dbReference type="EMBL" id="CP001598">
    <property type="protein sequence ID" value="ACQ49561.1"/>
    <property type="molecule type" value="Genomic_DNA"/>
</dbReference>
<dbReference type="SMR" id="C3PBL1"/>
<dbReference type="MEROPS" id="C26.957"/>
<dbReference type="KEGG" id="bai:BAA_0311"/>
<dbReference type="HOGENOM" id="CLU_014340_0_5_9"/>
<dbReference type="UniPathway" id="UPA00189">
    <property type="reaction ID" value="UER00296"/>
</dbReference>
<dbReference type="GO" id="GO:0005829">
    <property type="term" value="C:cytosol"/>
    <property type="evidence" value="ECO:0007669"/>
    <property type="project" value="TreeGrafter"/>
</dbReference>
<dbReference type="GO" id="GO:0005524">
    <property type="term" value="F:ATP binding"/>
    <property type="evidence" value="ECO:0007669"/>
    <property type="project" value="UniProtKB-UniRule"/>
</dbReference>
<dbReference type="GO" id="GO:0003921">
    <property type="term" value="F:GMP synthase activity"/>
    <property type="evidence" value="ECO:0007669"/>
    <property type="project" value="InterPro"/>
</dbReference>
<dbReference type="CDD" id="cd01742">
    <property type="entry name" value="GATase1_GMP_Synthase"/>
    <property type="match status" value="1"/>
</dbReference>
<dbReference type="CDD" id="cd01997">
    <property type="entry name" value="GMP_synthase_C"/>
    <property type="match status" value="1"/>
</dbReference>
<dbReference type="FunFam" id="3.30.300.10:FF:000002">
    <property type="entry name" value="GMP synthase [glutamine-hydrolyzing]"/>
    <property type="match status" value="1"/>
</dbReference>
<dbReference type="FunFam" id="3.40.50.620:FF:000001">
    <property type="entry name" value="GMP synthase [glutamine-hydrolyzing]"/>
    <property type="match status" value="1"/>
</dbReference>
<dbReference type="FunFam" id="3.40.50.880:FF:000001">
    <property type="entry name" value="GMP synthase [glutamine-hydrolyzing]"/>
    <property type="match status" value="1"/>
</dbReference>
<dbReference type="Gene3D" id="3.30.300.10">
    <property type="match status" value="1"/>
</dbReference>
<dbReference type="Gene3D" id="3.40.50.880">
    <property type="match status" value="1"/>
</dbReference>
<dbReference type="Gene3D" id="3.40.50.620">
    <property type="entry name" value="HUPs"/>
    <property type="match status" value="1"/>
</dbReference>
<dbReference type="HAMAP" id="MF_00344">
    <property type="entry name" value="GMP_synthase"/>
    <property type="match status" value="1"/>
</dbReference>
<dbReference type="InterPro" id="IPR029062">
    <property type="entry name" value="Class_I_gatase-like"/>
</dbReference>
<dbReference type="InterPro" id="IPR017926">
    <property type="entry name" value="GATASE"/>
</dbReference>
<dbReference type="InterPro" id="IPR001674">
    <property type="entry name" value="GMP_synth_C"/>
</dbReference>
<dbReference type="InterPro" id="IPR004739">
    <property type="entry name" value="GMP_synth_GATase"/>
</dbReference>
<dbReference type="InterPro" id="IPR022955">
    <property type="entry name" value="GMP_synthase"/>
</dbReference>
<dbReference type="InterPro" id="IPR025777">
    <property type="entry name" value="GMPS_ATP_PPase_dom"/>
</dbReference>
<dbReference type="InterPro" id="IPR022310">
    <property type="entry name" value="NAD/GMP_synthase"/>
</dbReference>
<dbReference type="InterPro" id="IPR014729">
    <property type="entry name" value="Rossmann-like_a/b/a_fold"/>
</dbReference>
<dbReference type="NCBIfam" id="TIGR00884">
    <property type="entry name" value="guaA_Cterm"/>
    <property type="match status" value="1"/>
</dbReference>
<dbReference type="NCBIfam" id="TIGR00888">
    <property type="entry name" value="guaA_Nterm"/>
    <property type="match status" value="1"/>
</dbReference>
<dbReference type="NCBIfam" id="NF000848">
    <property type="entry name" value="PRK00074.1"/>
    <property type="match status" value="1"/>
</dbReference>
<dbReference type="PANTHER" id="PTHR11922:SF2">
    <property type="entry name" value="GMP SYNTHASE [GLUTAMINE-HYDROLYZING]"/>
    <property type="match status" value="1"/>
</dbReference>
<dbReference type="PANTHER" id="PTHR11922">
    <property type="entry name" value="GMP SYNTHASE-RELATED"/>
    <property type="match status" value="1"/>
</dbReference>
<dbReference type="Pfam" id="PF00117">
    <property type="entry name" value="GATase"/>
    <property type="match status" value="1"/>
</dbReference>
<dbReference type="Pfam" id="PF00958">
    <property type="entry name" value="GMP_synt_C"/>
    <property type="match status" value="1"/>
</dbReference>
<dbReference type="Pfam" id="PF02540">
    <property type="entry name" value="NAD_synthase"/>
    <property type="match status" value="1"/>
</dbReference>
<dbReference type="PRINTS" id="PR00097">
    <property type="entry name" value="ANTSNTHASEII"/>
</dbReference>
<dbReference type="PRINTS" id="PR00099">
    <property type="entry name" value="CPSGATASE"/>
</dbReference>
<dbReference type="PRINTS" id="PR00096">
    <property type="entry name" value="GATASE"/>
</dbReference>
<dbReference type="SUPFAM" id="SSF52402">
    <property type="entry name" value="Adenine nucleotide alpha hydrolases-like"/>
    <property type="match status" value="1"/>
</dbReference>
<dbReference type="SUPFAM" id="SSF52317">
    <property type="entry name" value="Class I glutamine amidotransferase-like"/>
    <property type="match status" value="1"/>
</dbReference>
<dbReference type="SUPFAM" id="SSF54810">
    <property type="entry name" value="GMP synthetase C-terminal dimerisation domain"/>
    <property type="match status" value="1"/>
</dbReference>
<dbReference type="PROSITE" id="PS51273">
    <property type="entry name" value="GATASE_TYPE_1"/>
    <property type="match status" value="1"/>
</dbReference>
<dbReference type="PROSITE" id="PS51553">
    <property type="entry name" value="GMPS_ATP_PPASE"/>
    <property type="match status" value="1"/>
</dbReference>
<organism>
    <name type="scientific">Bacillus anthracis (strain A0248)</name>
    <dbReference type="NCBI Taxonomy" id="592021"/>
    <lineage>
        <taxon>Bacteria</taxon>
        <taxon>Bacillati</taxon>
        <taxon>Bacillota</taxon>
        <taxon>Bacilli</taxon>
        <taxon>Bacillales</taxon>
        <taxon>Bacillaceae</taxon>
        <taxon>Bacillus</taxon>
        <taxon>Bacillus cereus group</taxon>
    </lineage>
</organism>